<proteinExistence type="inferred from homology"/>
<protein>
    <recommendedName>
        <fullName evidence="1">Leucyl/phenylalanyl-tRNA--protein transferase</fullName>
        <ecNumber evidence="1">2.3.2.6</ecNumber>
    </recommendedName>
    <alternativeName>
        <fullName evidence="1">L/F-transferase</fullName>
    </alternativeName>
    <alternativeName>
        <fullName evidence="1">Leucyltransferase</fullName>
    </alternativeName>
    <alternativeName>
        <fullName evidence="1">Phenyalanyltransferase</fullName>
    </alternativeName>
</protein>
<dbReference type="EC" id="2.3.2.6" evidence="1"/>
<dbReference type="EMBL" id="AE008923">
    <property type="protein sequence ID" value="AAM36865.1"/>
    <property type="molecule type" value="Genomic_DNA"/>
</dbReference>
<dbReference type="RefSeq" id="WP_011051273.1">
    <property type="nucleotide sequence ID" value="NC_003919.1"/>
</dbReference>
<dbReference type="SMR" id="Q8PL03"/>
<dbReference type="GeneID" id="66911139"/>
<dbReference type="KEGG" id="xac:XAC2003"/>
<dbReference type="eggNOG" id="COG2360">
    <property type="taxonomic scope" value="Bacteria"/>
</dbReference>
<dbReference type="HOGENOM" id="CLU_075045_0_0_6"/>
<dbReference type="Proteomes" id="UP000000576">
    <property type="component" value="Chromosome"/>
</dbReference>
<dbReference type="GO" id="GO:0005737">
    <property type="term" value="C:cytoplasm"/>
    <property type="evidence" value="ECO:0007669"/>
    <property type="project" value="UniProtKB-SubCell"/>
</dbReference>
<dbReference type="GO" id="GO:0008914">
    <property type="term" value="F:leucyl-tRNA--protein transferase activity"/>
    <property type="evidence" value="ECO:0007669"/>
    <property type="project" value="UniProtKB-UniRule"/>
</dbReference>
<dbReference type="GO" id="GO:0030163">
    <property type="term" value="P:protein catabolic process"/>
    <property type="evidence" value="ECO:0007669"/>
    <property type="project" value="UniProtKB-UniRule"/>
</dbReference>
<dbReference type="FunFam" id="3.30.70.3550:FF:000001">
    <property type="entry name" value="Leucyl/phenylalanyl-tRNA--protein transferase"/>
    <property type="match status" value="1"/>
</dbReference>
<dbReference type="Gene3D" id="3.40.630.70">
    <property type="entry name" value="Leucyl/phenylalanyl-tRNA-protein transferase, C-terminal domain"/>
    <property type="match status" value="1"/>
</dbReference>
<dbReference type="Gene3D" id="3.30.70.3550">
    <property type="entry name" value="Leucyl/phenylalanyl-tRNA-protein transferase, N-terminal domain"/>
    <property type="match status" value="1"/>
</dbReference>
<dbReference type="HAMAP" id="MF_00688">
    <property type="entry name" value="Leu_Phe_trans"/>
    <property type="match status" value="1"/>
</dbReference>
<dbReference type="InterPro" id="IPR016181">
    <property type="entry name" value="Acyl_CoA_acyltransferase"/>
</dbReference>
<dbReference type="InterPro" id="IPR004616">
    <property type="entry name" value="Leu/Phe-tRNA_Trfase"/>
</dbReference>
<dbReference type="InterPro" id="IPR042203">
    <property type="entry name" value="Leu/Phe-tRNA_Trfase_C"/>
</dbReference>
<dbReference type="InterPro" id="IPR042221">
    <property type="entry name" value="Leu/Phe-tRNA_Trfase_N"/>
</dbReference>
<dbReference type="NCBIfam" id="TIGR00667">
    <property type="entry name" value="aat"/>
    <property type="match status" value="1"/>
</dbReference>
<dbReference type="PANTHER" id="PTHR30098">
    <property type="entry name" value="LEUCYL/PHENYLALANYL-TRNA--PROTEIN TRANSFERASE"/>
    <property type="match status" value="1"/>
</dbReference>
<dbReference type="PANTHER" id="PTHR30098:SF2">
    <property type="entry name" value="LEUCYL_PHENYLALANYL-TRNA--PROTEIN TRANSFERASE"/>
    <property type="match status" value="1"/>
</dbReference>
<dbReference type="Pfam" id="PF03588">
    <property type="entry name" value="Leu_Phe_trans"/>
    <property type="match status" value="1"/>
</dbReference>
<dbReference type="SUPFAM" id="SSF55729">
    <property type="entry name" value="Acyl-CoA N-acyltransferases (Nat)"/>
    <property type="match status" value="1"/>
</dbReference>
<evidence type="ECO:0000255" key="1">
    <source>
        <dbReference type="HAMAP-Rule" id="MF_00688"/>
    </source>
</evidence>
<feature type="chain" id="PRO_0000207250" description="Leucyl/phenylalanyl-tRNA--protein transferase">
    <location>
        <begin position="1"/>
        <end position="249"/>
    </location>
</feature>
<organism>
    <name type="scientific">Xanthomonas axonopodis pv. citri (strain 306)</name>
    <dbReference type="NCBI Taxonomy" id="190486"/>
    <lineage>
        <taxon>Bacteria</taxon>
        <taxon>Pseudomonadati</taxon>
        <taxon>Pseudomonadota</taxon>
        <taxon>Gammaproteobacteria</taxon>
        <taxon>Lysobacterales</taxon>
        <taxon>Lysobacteraceae</taxon>
        <taxon>Xanthomonas</taxon>
    </lineage>
</organism>
<keyword id="KW-0012">Acyltransferase</keyword>
<keyword id="KW-0963">Cytoplasm</keyword>
<keyword id="KW-0808">Transferase</keyword>
<name>LFTR_XANAC</name>
<gene>
    <name evidence="1" type="primary">aat</name>
    <name type="ordered locus">XAC2003</name>
</gene>
<comment type="function">
    <text evidence="1">Functions in the N-end rule pathway of protein degradation where it conjugates Leu, Phe and, less efficiently, Met from aminoacyl-tRNAs to the N-termini of proteins containing an N-terminal arginine or lysine.</text>
</comment>
<comment type="catalytic activity">
    <reaction evidence="1">
        <text>N-terminal L-lysyl-[protein] + L-leucyl-tRNA(Leu) = N-terminal L-leucyl-L-lysyl-[protein] + tRNA(Leu) + H(+)</text>
        <dbReference type="Rhea" id="RHEA:12340"/>
        <dbReference type="Rhea" id="RHEA-COMP:9613"/>
        <dbReference type="Rhea" id="RHEA-COMP:9622"/>
        <dbReference type="Rhea" id="RHEA-COMP:12670"/>
        <dbReference type="Rhea" id="RHEA-COMP:12671"/>
        <dbReference type="ChEBI" id="CHEBI:15378"/>
        <dbReference type="ChEBI" id="CHEBI:65249"/>
        <dbReference type="ChEBI" id="CHEBI:78442"/>
        <dbReference type="ChEBI" id="CHEBI:78494"/>
        <dbReference type="ChEBI" id="CHEBI:133043"/>
        <dbReference type="EC" id="2.3.2.6"/>
    </reaction>
</comment>
<comment type="catalytic activity">
    <reaction evidence="1">
        <text>N-terminal L-arginyl-[protein] + L-leucyl-tRNA(Leu) = N-terminal L-leucyl-L-arginyl-[protein] + tRNA(Leu) + H(+)</text>
        <dbReference type="Rhea" id="RHEA:50416"/>
        <dbReference type="Rhea" id="RHEA-COMP:9613"/>
        <dbReference type="Rhea" id="RHEA-COMP:9622"/>
        <dbReference type="Rhea" id="RHEA-COMP:12672"/>
        <dbReference type="Rhea" id="RHEA-COMP:12673"/>
        <dbReference type="ChEBI" id="CHEBI:15378"/>
        <dbReference type="ChEBI" id="CHEBI:64719"/>
        <dbReference type="ChEBI" id="CHEBI:78442"/>
        <dbReference type="ChEBI" id="CHEBI:78494"/>
        <dbReference type="ChEBI" id="CHEBI:133044"/>
        <dbReference type="EC" id="2.3.2.6"/>
    </reaction>
</comment>
<comment type="catalytic activity">
    <reaction evidence="1">
        <text>L-phenylalanyl-tRNA(Phe) + an N-terminal L-alpha-aminoacyl-[protein] = an N-terminal L-phenylalanyl-L-alpha-aminoacyl-[protein] + tRNA(Phe)</text>
        <dbReference type="Rhea" id="RHEA:43632"/>
        <dbReference type="Rhea" id="RHEA-COMP:9668"/>
        <dbReference type="Rhea" id="RHEA-COMP:9699"/>
        <dbReference type="Rhea" id="RHEA-COMP:10636"/>
        <dbReference type="Rhea" id="RHEA-COMP:10637"/>
        <dbReference type="ChEBI" id="CHEBI:78442"/>
        <dbReference type="ChEBI" id="CHEBI:78531"/>
        <dbReference type="ChEBI" id="CHEBI:78597"/>
        <dbReference type="ChEBI" id="CHEBI:83561"/>
        <dbReference type="EC" id="2.3.2.6"/>
    </reaction>
</comment>
<comment type="subcellular location">
    <subcellularLocation>
        <location evidence="1">Cytoplasm</location>
    </subcellularLocation>
</comment>
<comment type="similarity">
    <text evidence="1">Belongs to the L/F-transferase family.</text>
</comment>
<reference key="1">
    <citation type="journal article" date="2002" name="Nature">
        <title>Comparison of the genomes of two Xanthomonas pathogens with differing host specificities.</title>
        <authorList>
            <person name="da Silva A.C.R."/>
            <person name="Ferro J.A."/>
            <person name="Reinach F.C."/>
            <person name="Farah C.S."/>
            <person name="Furlan L.R."/>
            <person name="Quaggio R.B."/>
            <person name="Monteiro-Vitorello C.B."/>
            <person name="Van Sluys M.A."/>
            <person name="Almeida N.F. Jr."/>
            <person name="Alves L.M.C."/>
            <person name="do Amaral A.M."/>
            <person name="Bertolini M.C."/>
            <person name="Camargo L.E.A."/>
            <person name="Camarotte G."/>
            <person name="Cannavan F."/>
            <person name="Cardozo J."/>
            <person name="Chambergo F."/>
            <person name="Ciapina L.P."/>
            <person name="Cicarelli R.M.B."/>
            <person name="Coutinho L.L."/>
            <person name="Cursino-Santos J.R."/>
            <person name="El-Dorry H."/>
            <person name="Faria J.B."/>
            <person name="Ferreira A.J.S."/>
            <person name="Ferreira R.C.C."/>
            <person name="Ferro M.I.T."/>
            <person name="Formighieri E.F."/>
            <person name="Franco M.C."/>
            <person name="Greggio C.C."/>
            <person name="Gruber A."/>
            <person name="Katsuyama A.M."/>
            <person name="Kishi L.T."/>
            <person name="Leite R.P."/>
            <person name="Lemos E.G.M."/>
            <person name="Lemos M.V.F."/>
            <person name="Locali E.C."/>
            <person name="Machado M.A."/>
            <person name="Madeira A.M.B.N."/>
            <person name="Martinez-Rossi N.M."/>
            <person name="Martins E.C."/>
            <person name="Meidanis J."/>
            <person name="Menck C.F.M."/>
            <person name="Miyaki C.Y."/>
            <person name="Moon D.H."/>
            <person name="Moreira L.M."/>
            <person name="Novo M.T.M."/>
            <person name="Okura V.K."/>
            <person name="Oliveira M.C."/>
            <person name="Oliveira V.R."/>
            <person name="Pereira H.A."/>
            <person name="Rossi A."/>
            <person name="Sena J.A.D."/>
            <person name="Silva C."/>
            <person name="de Souza R.F."/>
            <person name="Spinola L.A.F."/>
            <person name="Takita M.A."/>
            <person name="Tamura R.E."/>
            <person name="Teixeira E.C."/>
            <person name="Tezza R.I.D."/>
            <person name="Trindade dos Santos M."/>
            <person name="Truffi D."/>
            <person name="Tsai S.M."/>
            <person name="White F.F."/>
            <person name="Setubal J.C."/>
            <person name="Kitajima J.P."/>
        </authorList>
    </citation>
    <scope>NUCLEOTIDE SEQUENCE [LARGE SCALE GENOMIC DNA]</scope>
    <source>
        <strain>306</strain>
    </source>
</reference>
<accession>Q8PL03</accession>
<sequence length="249" mass="27301">MARHLPFLLDADPTAPFPPAAQALRDPDGLLAIGGDLAPQRLLNAYAHGIFPWFSQDQPILWWSPDPRMVFRTDALRLSSRFRRQLRSSSWTVRADTAFEQVIDACASVPRAGQDGTWITAQMQQAYIALHELGHAHSLEVFDGTRLVGGIYGVAIGQMFFGESMFSAQSGGSKVALAALAMHLHTEGWPLLDAQVENPHLLSLGAQRLPRAQFLQQVQLQVARPALPGTWSGRYGQRPASSLGEARLT</sequence>